<keyword id="KW-0687">Ribonucleoprotein</keyword>
<keyword id="KW-0689">Ribosomal protein</keyword>
<keyword id="KW-0694">RNA-binding</keyword>
<keyword id="KW-0699">rRNA-binding</keyword>
<name>RL9_UREP2</name>
<gene>
    <name evidence="1" type="primary">rplI</name>
    <name type="ordered locus">UPA3_0588</name>
</gene>
<protein>
    <recommendedName>
        <fullName evidence="1">Large ribosomal subunit protein bL9</fullName>
    </recommendedName>
    <alternativeName>
        <fullName evidence="2">50S ribosomal protein L9</fullName>
    </alternativeName>
</protein>
<sequence length="145" mass="16420">MKVILLEDIASLGKKNEIIDVSDGYAKNFLIRQKKAVALTNKSQEVLNKDLAILEAQEQQAILDATLLKDKLEQKPLQFFLKTNNLQTFGSISNKQIIDEINKEQKFITKHMITKPHALGIGEHIVEILLHKKVTAKLHVIVSKE</sequence>
<reference key="1">
    <citation type="submission" date="2008-02" db="EMBL/GenBank/DDBJ databases">
        <title>Genome sequence of Ureaplasma parvum serovar 3.</title>
        <authorList>
            <person name="Methe B.A."/>
            <person name="Glass J."/>
            <person name="Waites K."/>
            <person name="Shrivastava S."/>
        </authorList>
    </citation>
    <scope>NUCLEOTIDE SEQUENCE [LARGE SCALE GENOMIC DNA]</scope>
    <source>
        <strain>ATCC 27815 / 27 / NCTC 11736</strain>
    </source>
</reference>
<dbReference type="EMBL" id="CP000942">
    <property type="protein sequence ID" value="ACA33164.1"/>
    <property type="molecule type" value="Genomic_DNA"/>
</dbReference>
<dbReference type="RefSeq" id="WP_006688495.1">
    <property type="nucleotide sequence ID" value="NC_010503.1"/>
</dbReference>
<dbReference type="SMR" id="B1AJJ1"/>
<dbReference type="GeneID" id="29672522"/>
<dbReference type="KEGG" id="upa:UPA3_0588"/>
<dbReference type="HOGENOM" id="CLU_078938_3_0_14"/>
<dbReference type="Proteomes" id="UP000002162">
    <property type="component" value="Chromosome"/>
</dbReference>
<dbReference type="GO" id="GO:1990904">
    <property type="term" value="C:ribonucleoprotein complex"/>
    <property type="evidence" value="ECO:0007669"/>
    <property type="project" value="UniProtKB-KW"/>
</dbReference>
<dbReference type="GO" id="GO:0005840">
    <property type="term" value="C:ribosome"/>
    <property type="evidence" value="ECO:0007669"/>
    <property type="project" value="UniProtKB-KW"/>
</dbReference>
<dbReference type="GO" id="GO:0019843">
    <property type="term" value="F:rRNA binding"/>
    <property type="evidence" value="ECO:0007669"/>
    <property type="project" value="UniProtKB-UniRule"/>
</dbReference>
<dbReference type="GO" id="GO:0003735">
    <property type="term" value="F:structural constituent of ribosome"/>
    <property type="evidence" value="ECO:0007669"/>
    <property type="project" value="InterPro"/>
</dbReference>
<dbReference type="GO" id="GO:0006412">
    <property type="term" value="P:translation"/>
    <property type="evidence" value="ECO:0007669"/>
    <property type="project" value="UniProtKB-UniRule"/>
</dbReference>
<dbReference type="Gene3D" id="3.10.430.100">
    <property type="entry name" value="Ribosomal protein L9, C-terminal domain"/>
    <property type="match status" value="1"/>
</dbReference>
<dbReference type="Gene3D" id="3.40.5.10">
    <property type="entry name" value="Ribosomal protein L9, N-terminal domain"/>
    <property type="match status" value="1"/>
</dbReference>
<dbReference type="HAMAP" id="MF_00503">
    <property type="entry name" value="Ribosomal_bL9"/>
    <property type="match status" value="1"/>
</dbReference>
<dbReference type="InterPro" id="IPR000244">
    <property type="entry name" value="Ribosomal_bL9"/>
</dbReference>
<dbReference type="InterPro" id="IPR009027">
    <property type="entry name" value="Ribosomal_bL9/RNase_H1_N"/>
</dbReference>
<dbReference type="InterPro" id="IPR020594">
    <property type="entry name" value="Ribosomal_bL9_bac/chp"/>
</dbReference>
<dbReference type="InterPro" id="IPR020069">
    <property type="entry name" value="Ribosomal_bL9_C"/>
</dbReference>
<dbReference type="InterPro" id="IPR036791">
    <property type="entry name" value="Ribosomal_bL9_C_sf"/>
</dbReference>
<dbReference type="InterPro" id="IPR020070">
    <property type="entry name" value="Ribosomal_bL9_N"/>
</dbReference>
<dbReference type="InterPro" id="IPR036935">
    <property type="entry name" value="Ribosomal_bL9_N_sf"/>
</dbReference>
<dbReference type="NCBIfam" id="TIGR00158">
    <property type="entry name" value="L9"/>
    <property type="match status" value="1"/>
</dbReference>
<dbReference type="PANTHER" id="PTHR21368">
    <property type="entry name" value="50S RIBOSOMAL PROTEIN L9"/>
    <property type="match status" value="1"/>
</dbReference>
<dbReference type="Pfam" id="PF03948">
    <property type="entry name" value="Ribosomal_L9_C"/>
    <property type="match status" value="1"/>
</dbReference>
<dbReference type="Pfam" id="PF01281">
    <property type="entry name" value="Ribosomal_L9_N"/>
    <property type="match status" value="1"/>
</dbReference>
<dbReference type="SUPFAM" id="SSF55658">
    <property type="entry name" value="L9 N-domain-like"/>
    <property type="match status" value="1"/>
</dbReference>
<dbReference type="SUPFAM" id="SSF55653">
    <property type="entry name" value="Ribosomal protein L9 C-domain"/>
    <property type="match status" value="1"/>
</dbReference>
<dbReference type="PROSITE" id="PS00651">
    <property type="entry name" value="RIBOSOMAL_L9"/>
    <property type="match status" value="1"/>
</dbReference>
<proteinExistence type="inferred from homology"/>
<comment type="function">
    <text evidence="1">Binds to the 23S rRNA.</text>
</comment>
<comment type="similarity">
    <text evidence="1">Belongs to the bacterial ribosomal protein bL9 family.</text>
</comment>
<organism>
    <name type="scientific">Ureaplasma parvum serovar 3 (strain ATCC 27815 / 27 / NCTC 11736)</name>
    <dbReference type="NCBI Taxonomy" id="505682"/>
    <lineage>
        <taxon>Bacteria</taxon>
        <taxon>Bacillati</taxon>
        <taxon>Mycoplasmatota</taxon>
        <taxon>Mycoplasmoidales</taxon>
        <taxon>Mycoplasmoidaceae</taxon>
        <taxon>Ureaplasma</taxon>
    </lineage>
</organism>
<feature type="chain" id="PRO_1000081508" description="Large ribosomal subunit protein bL9">
    <location>
        <begin position="1"/>
        <end position="145"/>
    </location>
</feature>
<evidence type="ECO:0000255" key="1">
    <source>
        <dbReference type="HAMAP-Rule" id="MF_00503"/>
    </source>
</evidence>
<evidence type="ECO:0000305" key="2"/>
<accession>B1AJJ1</accession>